<accession>Q9VYX7</accession>
<evidence type="ECO:0000255" key="1"/>
<evidence type="ECO:0000269" key="2">
    <source>
    </source>
</evidence>
<evidence type="ECO:0000269" key="3">
    <source>
    </source>
</evidence>
<evidence type="ECO:0000269" key="4">
    <source>
    </source>
</evidence>
<evidence type="ECO:0000269" key="5">
    <source>
    </source>
</evidence>
<evidence type="ECO:0000269" key="6">
    <source>
    </source>
</evidence>
<evidence type="ECO:0000269" key="7">
    <source>
    </source>
</evidence>
<evidence type="ECO:0000269" key="8">
    <source>
    </source>
</evidence>
<evidence type="ECO:0000269" key="9">
    <source>
    </source>
</evidence>
<evidence type="ECO:0000305" key="10"/>
<evidence type="ECO:0000305" key="11">
    <source>
    </source>
</evidence>
<evidence type="ECO:0007829" key="12">
    <source>
        <dbReference type="PDB" id="1S2J"/>
    </source>
</evidence>
<evidence type="ECO:0007829" key="13">
    <source>
        <dbReference type="PDB" id="1SXR"/>
    </source>
</evidence>
<reference key="1">
    <citation type="journal article" date="2000" name="Proc. Natl. Acad. Sci. U.S.A.">
        <title>A family of peptidoglycan recognition proteins in the fruit fly Drosophila melanogaster.</title>
        <authorList>
            <person name="Werner T."/>
            <person name="Liu G."/>
            <person name="Kang D."/>
            <person name="Ekengren S."/>
            <person name="Steiner H."/>
            <person name="Hultmark D."/>
        </authorList>
    </citation>
    <scope>NUCLEOTIDE SEQUENCE [GENOMIC DNA / MRNA]</scope>
    <scope>PROTEIN SEQUENCE OF N-TERMINUS</scope>
    <scope>PGN-BINDING</scope>
    <scope>TISSUE SPECIFICITY</scope>
    <scope>INDUCTION</scope>
</reference>
<reference key="2">
    <citation type="journal article" date="2003" name="J. Mol. Evol.">
        <title>The evolution of parasite recognition genes in the innate immune system: purifying selection on Drosophila melanogaster peptidoglycan recognition proteins.</title>
        <authorList>
            <person name="Jiggins F.M."/>
            <person name="Hurst G.D.D."/>
        </authorList>
    </citation>
    <scope>NUCLEOTIDE SEQUENCE [GENOMIC DNA]</scope>
    <source>
        <strain>DI7</strain>
        <strain>Draveil</strain>
        <strain>KY024</strain>
        <strain>KY038</strain>
        <strain>Loua</strain>
        <strain>Monty5</strain>
        <strain>P.bourg</strain>
        <strain>S30</strain>
        <strain>Tahiti</strain>
        <strain>Texas</strain>
        <strain>ZW141</strain>
    </source>
</reference>
<reference key="3">
    <citation type="journal article" date="2000" name="Science">
        <title>The genome sequence of Drosophila melanogaster.</title>
        <authorList>
            <person name="Adams M.D."/>
            <person name="Celniker S.E."/>
            <person name="Holt R.A."/>
            <person name="Evans C.A."/>
            <person name="Gocayne J.D."/>
            <person name="Amanatides P.G."/>
            <person name="Scherer S.E."/>
            <person name="Li P.W."/>
            <person name="Hoskins R.A."/>
            <person name="Galle R.F."/>
            <person name="George R.A."/>
            <person name="Lewis S.E."/>
            <person name="Richards S."/>
            <person name="Ashburner M."/>
            <person name="Henderson S.N."/>
            <person name="Sutton G.G."/>
            <person name="Wortman J.R."/>
            <person name="Yandell M.D."/>
            <person name="Zhang Q."/>
            <person name="Chen L.X."/>
            <person name="Brandon R.C."/>
            <person name="Rogers Y.-H.C."/>
            <person name="Blazej R.G."/>
            <person name="Champe M."/>
            <person name="Pfeiffer B.D."/>
            <person name="Wan K.H."/>
            <person name="Doyle C."/>
            <person name="Baxter E.G."/>
            <person name="Helt G."/>
            <person name="Nelson C.R."/>
            <person name="Miklos G.L.G."/>
            <person name="Abril J.F."/>
            <person name="Agbayani A."/>
            <person name="An H.-J."/>
            <person name="Andrews-Pfannkoch C."/>
            <person name="Baldwin D."/>
            <person name="Ballew R.M."/>
            <person name="Basu A."/>
            <person name="Baxendale J."/>
            <person name="Bayraktaroglu L."/>
            <person name="Beasley E.M."/>
            <person name="Beeson K.Y."/>
            <person name="Benos P.V."/>
            <person name="Berman B.P."/>
            <person name="Bhandari D."/>
            <person name="Bolshakov S."/>
            <person name="Borkova D."/>
            <person name="Botchan M.R."/>
            <person name="Bouck J."/>
            <person name="Brokstein P."/>
            <person name="Brottier P."/>
            <person name="Burtis K.C."/>
            <person name="Busam D.A."/>
            <person name="Butler H."/>
            <person name="Cadieu E."/>
            <person name="Center A."/>
            <person name="Chandra I."/>
            <person name="Cherry J.M."/>
            <person name="Cawley S."/>
            <person name="Dahlke C."/>
            <person name="Davenport L.B."/>
            <person name="Davies P."/>
            <person name="de Pablos B."/>
            <person name="Delcher A."/>
            <person name="Deng Z."/>
            <person name="Mays A.D."/>
            <person name="Dew I."/>
            <person name="Dietz S.M."/>
            <person name="Dodson K."/>
            <person name="Doup L.E."/>
            <person name="Downes M."/>
            <person name="Dugan-Rocha S."/>
            <person name="Dunkov B.C."/>
            <person name="Dunn P."/>
            <person name="Durbin K.J."/>
            <person name="Evangelista C.C."/>
            <person name="Ferraz C."/>
            <person name="Ferriera S."/>
            <person name="Fleischmann W."/>
            <person name="Fosler C."/>
            <person name="Gabrielian A.E."/>
            <person name="Garg N.S."/>
            <person name="Gelbart W.M."/>
            <person name="Glasser K."/>
            <person name="Glodek A."/>
            <person name="Gong F."/>
            <person name="Gorrell J.H."/>
            <person name="Gu Z."/>
            <person name="Guan P."/>
            <person name="Harris M."/>
            <person name="Harris N.L."/>
            <person name="Harvey D.A."/>
            <person name="Heiman T.J."/>
            <person name="Hernandez J.R."/>
            <person name="Houck J."/>
            <person name="Hostin D."/>
            <person name="Houston K.A."/>
            <person name="Howland T.J."/>
            <person name="Wei M.-H."/>
            <person name="Ibegwam C."/>
            <person name="Jalali M."/>
            <person name="Kalush F."/>
            <person name="Karpen G.H."/>
            <person name="Ke Z."/>
            <person name="Kennison J.A."/>
            <person name="Ketchum K.A."/>
            <person name="Kimmel B.E."/>
            <person name="Kodira C.D."/>
            <person name="Kraft C.L."/>
            <person name="Kravitz S."/>
            <person name="Kulp D."/>
            <person name="Lai Z."/>
            <person name="Lasko P."/>
            <person name="Lei Y."/>
            <person name="Levitsky A.A."/>
            <person name="Li J.H."/>
            <person name="Li Z."/>
            <person name="Liang Y."/>
            <person name="Lin X."/>
            <person name="Liu X."/>
            <person name="Mattei B."/>
            <person name="McIntosh T.C."/>
            <person name="McLeod M.P."/>
            <person name="McPherson D."/>
            <person name="Merkulov G."/>
            <person name="Milshina N.V."/>
            <person name="Mobarry C."/>
            <person name="Morris J."/>
            <person name="Moshrefi A."/>
            <person name="Mount S.M."/>
            <person name="Moy M."/>
            <person name="Murphy B."/>
            <person name="Murphy L."/>
            <person name="Muzny D.M."/>
            <person name="Nelson D.L."/>
            <person name="Nelson D.R."/>
            <person name="Nelson K.A."/>
            <person name="Nixon K."/>
            <person name="Nusskern D.R."/>
            <person name="Pacleb J.M."/>
            <person name="Palazzolo M."/>
            <person name="Pittman G.S."/>
            <person name="Pan S."/>
            <person name="Pollard J."/>
            <person name="Puri V."/>
            <person name="Reese M.G."/>
            <person name="Reinert K."/>
            <person name="Remington K."/>
            <person name="Saunders R.D.C."/>
            <person name="Scheeler F."/>
            <person name="Shen H."/>
            <person name="Shue B.C."/>
            <person name="Siden-Kiamos I."/>
            <person name="Simpson M."/>
            <person name="Skupski M.P."/>
            <person name="Smith T.J."/>
            <person name="Spier E."/>
            <person name="Spradling A.C."/>
            <person name="Stapleton M."/>
            <person name="Strong R."/>
            <person name="Sun E."/>
            <person name="Svirskas R."/>
            <person name="Tector C."/>
            <person name="Turner R."/>
            <person name="Venter E."/>
            <person name="Wang A.H."/>
            <person name="Wang X."/>
            <person name="Wang Z.-Y."/>
            <person name="Wassarman D.A."/>
            <person name="Weinstock G.M."/>
            <person name="Weissenbach J."/>
            <person name="Williams S.M."/>
            <person name="Woodage T."/>
            <person name="Worley K.C."/>
            <person name="Wu D."/>
            <person name="Yang S."/>
            <person name="Yao Q.A."/>
            <person name="Ye J."/>
            <person name="Yeh R.-F."/>
            <person name="Zaveri J.S."/>
            <person name="Zhan M."/>
            <person name="Zhang G."/>
            <person name="Zhao Q."/>
            <person name="Zheng L."/>
            <person name="Zheng X.H."/>
            <person name="Zhong F.N."/>
            <person name="Zhong W."/>
            <person name="Zhou X."/>
            <person name="Zhu S.C."/>
            <person name="Zhu X."/>
            <person name="Smith H.O."/>
            <person name="Gibbs R.A."/>
            <person name="Myers E.W."/>
            <person name="Rubin G.M."/>
            <person name="Venter J.C."/>
        </authorList>
    </citation>
    <scope>NUCLEOTIDE SEQUENCE [LARGE SCALE GENOMIC DNA]</scope>
    <source>
        <strain>Berkeley</strain>
    </source>
</reference>
<reference key="4">
    <citation type="journal article" date="2002" name="Genome Biol.">
        <title>Annotation of the Drosophila melanogaster euchromatic genome: a systematic review.</title>
        <authorList>
            <person name="Misra S."/>
            <person name="Crosby M.A."/>
            <person name="Mungall C.J."/>
            <person name="Matthews B.B."/>
            <person name="Campbell K.S."/>
            <person name="Hradecky P."/>
            <person name="Huang Y."/>
            <person name="Kaminker J.S."/>
            <person name="Millburn G.H."/>
            <person name="Prochnik S.E."/>
            <person name="Smith C.D."/>
            <person name="Tupy J.L."/>
            <person name="Whitfield E.J."/>
            <person name="Bayraktaroglu L."/>
            <person name="Berman B.P."/>
            <person name="Bettencourt B.R."/>
            <person name="Celniker S.E."/>
            <person name="de Grey A.D.N.J."/>
            <person name="Drysdale R.A."/>
            <person name="Harris N.L."/>
            <person name="Richter J."/>
            <person name="Russo S."/>
            <person name="Schroeder A.J."/>
            <person name="Shu S.Q."/>
            <person name="Stapleton M."/>
            <person name="Yamada C."/>
            <person name="Ashburner M."/>
            <person name="Gelbart W.M."/>
            <person name="Rubin G.M."/>
            <person name="Lewis S.E."/>
        </authorList>
    </citation>
    <scope>GENOME REANNOTATION</scope>
    <source>
        <strain>Berkeley</strain>
    </source>
</reference>
<reference key="5">
    <citation type="journal article" date="2002" name="Genome Biol.">
        <title>A Drosophila full-length cDNA resource.</title>
        <authorList>
            <person name="Stapleton M."/>
            <person name="Carlson J.W."/>
            <person name="Brokstein P."/>
            <person name="Yu C."/>
            <person name="Champe M."/>
            <person name="George R.A."/>
            <person name="Guarin H."/>
            <person name="Kronmiller B."/>
            <person name="Pacleb J.M."/>
            <person name="Park S."/>
            <person name="Wan K.H."/>
            <person name="Rubin G.M."/>
            <person name="Celniker S.E."/>
        </authorList>
    </citation>
    <scope>NUCLEOTIDE SEQUENCE [LARGE SCALE MRNA]</scope>
    <source>
        <strain>Berkeley</strain>
        <tissue>Testis</tissue>
    </source>
</reference>
<reference key="6">
    <citation type="journal article" date="2001" name="Nature">
        <title>Drosophila Toll is activated by Gram-positive bacteria through a circulating peptidoglycan recognition protein.</title>
        <authorList>
            <person name="Michel T."/>
            <person name="Reichhart J.-M."/>
            <person name="Hoffmann J.A."/>
            <person name="Royet J."/>
        </authorList>
    </citation>
    <scope>FUNCTION</scope>
    <scope>TISSUE SPECIFICITY</scope>
    <scope>SUBCELLULAR LOCATION</scope>
    <scope>MUTAGENESIS OF CYS-80</scope>
</reference>
<reference key="7">
    <citation type="journal article" date="2002" name="EMBO J.">
        <title>The Toll and Imd pathways are the major regulators of the immune response in Drosophila.</title>
        <authorList>
            <person name="De Gregorio E."/>
            <person name="Spellman P.T."/>
            <person name="Tzou P."/>
            <person name="Rubin G.M."/>
            <person name="Lemaitre B."/>
        </authorList>
    </citation>
    <scope>INDUCTION</scope>
</reference>
<reference key="8">
    <citation type="journal article" date="2003" name="Science">
        <title>Dual activation of the Drosophila toll pathway by two pattern recognition receptors.</title>
        <authorList>
            <person name="Gobert V."/>
            <person name="Gottar M."/>
            <person name="Matskevich A.A."/>
            <person name="Rutschmann S."/>
            <person name="Royet J."/>
            <person name="Belvin M."/>
            <person name="Hoffmann J.A."/>
            <person name="Ferrandon D."/>
        </authorList>
    </citation>
    <scope>FUNCTION</scope>
</reference>
<reference key="9">
    <citation type="journal article" date="2004" name="J. Biol. Chem.">
        <title>In vivo RNA interference analysis reveals an unexpected role for GNBP1 in the defense against Gram-positive bacterial infection in Drosophila adults.</title>
        <authorList>
            <person name="Pili-Floury S."/>
            <person name="Leulier F."/>
            <person name="Takahashi K."/>
            <person name="Saigo K."/>
            <person name="Samain E."/>
            <person name="Ueda R."/>
            <person name="Lemaitre B."/>
        </authorList>
    </citation>
    <scope>FUNCTION</scope>
</reference>
<reference key="10">
    <citation type="journal article" date="2004" name="Nat. Immunol.">
        <title>Function of the Drosophila pattern-recognition receptor PGRP-SD in the detection of Gram-positive bacteria.</title>
        <authorList>
            <person name="Bischoff V."/>
            <person name="Vignal C."/>
            <person name="Boneca I.G."/>
            <person name="Michel T."/>
            <person name="Hoffmann J.A."/>
            <person name="Royet J."/>
        </authorList>
    </citation>
    <scope>FUNCTION</scope>
</reference>
<reference key="11">
    <citation type="journal article" date="2006" name="Dev. Cell">
        <title>A Spatzle-processing enzyme required for toll signaling activation in Drosophila innate immunity.</title>
        <authorList>
            <person name="Jang I.H."/>
            <person name="Chosa N."/>
            <person name="Kim S.H."/>
            <person name="Nam H.J."/>
            <person name="Lemaitre B."/>
            <person name="Ochiai M."/>
            <person name="Kambris Z."/>
            <person name="Brun S."/>
            <person name="Hashimoto C."/>
            <person name="Ashida M."/>
            <person name="Brey P.T."/>
            <person name="Lee W.J."/>
        </authorList>
    </citation>
    <scope>FUNCTION</scope>
</reference>
<reference key="12">
    <citation type="journal article" date="2004" name="J. Mol. Biol.">
        <title>Crystal structure of the Drosophila peptidoglycan recognition protein (PGRP)-SA at 1.56 A resolution.</title>
        <authorList>
            <person name="Reiser J.-B."/>
            <person name="Teyton L."/>
            <person name="Wilson I.A."/>
        </authorList>
    </citation>
    <scope>X-RAY CRYSTALLOGRAPHY (1.56 ANGSTROMS) OF 27-203</scope>
    <scope>DISULFIDE BONDS</scope>
</reference>
<reference key="13">
    <citation type="journal article" date="2004" name="PLoS Biol.">
        <title>A Drosophila pattern recognition receptor contains a peptidoglycan docking groove and unusual L,D-carboxypeptidase activity.</title>
        <authorList>
            <person name="Chang C.-I."/>
            <person name="Pili-Floury S."/>
            <person name="Herve M."/>
            <person name="Parquet C."/>
            <person name="Chelliah Y."/>
            <person name="Lemaitre B."/>
            <person name="Mengin-Lecreulx D."/>
            <person name="Deisenhofer J."/>
        </authorList>
    </citation>
    <scope>X-RAY CRYSTALLOGRAPHY (2.2 ANGSTROMS)</scope>
    <scope>FUNCTION</scope>
    <scope>CATALYTIC ACTIVITY</scope>
    <scope>DISULFIDE BONDS</scope>
    <scope>BIOPHYSICOCHEMICAL PROPERTIES</scope>
    <scope>MUTAGENESIS OF CYS-37; HIS-68; 70-VAL-THR-71; CYS-74; 96-ASP--ASN-98; 90-TYR-HIS-91; SER-101; TYR-126; ILE-180; THR-182 AND SER-184</scope>
</reference>
<sequence length="203" mass="22260">MQPVRFGSPWIMAIGLVLLLLAFVSAGKSRQRSPANCPTIKLKRQWGGKPSLGLHYQVRPIRYVVIHHTVTGECSGLLKCAEILQNMQAYHQNELDFNDISYNFLIGNDGIVYEGTGWGLRGAHTYGYNAIGTGIAFIGNFVDKLPSDAALQAAKDLLACGVQQGELSEDYALIAGSQVISTQSPGLTLYNEIQEWPHWLSNP</sequence>
<gene>
    <name type="primary">PGRP-SA</name>
    <name type="synonym">seml</name>
    <name type="ORF">CG11709</name>
</gene>
<proteinExistence type="evidence at protein level"/>
<organism>
    <name type="scientific">Drosophila melanogaster</name>
    <name type="common">Fruit fly</name>
    <dbReference type="NCBI Taxonomy" id="7227"/>
    <lineage>
        <taxon>Eukaryota</taxon>
        <taxon>Metazoa</taxon>
        <taxon>Ecdysozoa</taxon>
        <taxon>Arthropoda</taxon>
        <taxon>Hexapoda</taxon>
        <taxon>Insecta</taxon>
        <taxon>Pterygota</taxon>
        <taxon>Neoptera</taxon>
        <taxon>Endopterygota</taxon>
        <taxon>Diptera</taxon>
        <taxon>Brachycera</taxon>
        <taxon>Muscomorpha</taxon>
        <taxon>Ephydroidea</taxon>
        <taxon>Drosophilidae</taxon>
        <taxon>Drosophila</taxon>
        <taxon>Sophophora</taxon>
    </lineage>
</organism>
<protein>
    <recommendedName>
        <fullName>Peptidoglycan-recognition protein SA</fullName>
        <ecNumber evidence="7">3.4.17.13</ecNumber>
    </recommendedName>
    <alternativeName>
        <fullName>Protein semmelweis</fullName>
    </alternativeName>
</protein>
<dbReference type="EC" id="3.4.17.13" evidence="7"/>
<dbReference type="EMBL" id="AF207540">
    <property type="protein sequence ID" value="AAG23734.1"/>
    <property type="molecule type" value="Genomic_DNA"/>
</dbReference>
<dbReference type="EMBL" id="AF207541">
    <property type="protein sequence ID" value="AAG23735.1"/>
    <property type="molecule type" value="mRNA"/>
</dbReference>
<dbReference type="EMBL" id="AJ556551">
    <property type="protein sequence ID" value="CAD89116.1"/>
    <property type="molecule type" value="Genomic_DNA"/>
</dbReference>
<dbReference type="EMBL" id="AJ556552">
    <property type="protein sequence ID" value="CAD89117.1"/>
    <property type="molecule type" value="Genomic_DNA"/>
</dbReference>
<dbReference type="EMBL" id="AJ556553">
    <property type="protein sequence ID" value="CAD89118.1"/>
    <property type="molecule type" value="Genomic_DNA"/>
</dbReference>
<dbReference type="EMBL" id="AJ556554">
    <property type="protein sequence ID" value="CAD89119.1"/>
    <property type="molecule type" value="Genomic_DNA"/>
</dbReference>
<dbReference type="EMBL" id="AJ556555">
    <property type="protein sequence ID" value="CAD89120.1"/>
    <property type="molecule type" value="Genomic_DNA"/>
</dbReference>
<dbReference type="EMBL" id="AJ556556">
    <property type="protein sequence ID" value="CAD89121.1"/>
    <property type="molecule type" value="Genomic_DNA"/>
</dbReference>
<dbReference type="EMBL" id="AJ556557">
    <property type="protein sequence ID" value="CAD89122.1"/>
    <property type="molecule type" value="Genomic_DNA"/>
</dbReference>
<dbReference type="EMBL" id="AJ556558">
    <property type="protein sequence ID" value="CAD89123.1"/>
    <property type="molecule type" value="Genomic_DNA"/>
</dbReference>
<dbReference type="EMBL" id="AJ556559">
    <property type="protein sequence ID" value="CAD89124.1"/>
    <property type="molecule type" value="Genomic_DNA"/>
</dbReference>
<dbReference type="EMBL" id="AJ556560">
    <property type="protein sequence ID" value="CAD89125.1"/>
    <property type="molecule type" value="Genomic_DNA"/>
</dbReference>
<dbReference type="EMBL" id="AJ556561">
    <property type="protein sequence ID" value="CAD89126.1"/>
    <property type="molecule type" value="Genomic_DNA"/>
</dbReference>
<dbReference type="EMBL" id="AE014298">
    <property type="protein sequence ID" value="AAF48056.1"/>
    <property type="molecule type" value="Genomic_DNA"/>
</dbReference>
<dbReference type="EMBL" id="AY075293">
    <property type="protein sequence ID" value="AAL68160.1"/>
    <property type="molecule type" value="mRNA"/>
</dbReference>
<dbReference type="RefSeq" id="NP_001285128.1">
    <property type="nucleotide sequence ID" value="NM_001298199.1"/>
</dbReference>
<dbReference type="RefSeq" id="NP_572727.1">
    <property type="nucleotide sequence ID" value="NM_132499.3"/>
</dbReference>
<dbReference type="PDB" id="1S2J">
    <property type="method" value="X-ray"/>
    <property type="resolution" value="2.20 A"/>
    <property type="chains" value="A/B=1-203"/>
</dbReference>
<dbReference type="PDB" id="1SXR">
    <property type="method" value="X-ray"/>
    <property type="resolution" value="1.56 A"/>
    <property type="chains" value="A/B=27-203"/>
</dbReference>
<dbReference type="PDBsum" id="1S2J"/>
<dbReference type="PDBsum" id="1SXR"/>
<dbReference type="SMR" id="Q9VYX7"/>
<dbReference type="BioGRID" id="58509">
    <property type="interactions" value="8"/>
</dbReference>
<dbReference type="DIP" id="DIP-60775N"/>
<dbReference type="FunCoup" id="Q9VYX7">
    <property type="interactions" value="94"/>
</dbReference>
<dbReference type="IntAct" id="Q9VYX7">
    <property type="interactions" value="7"/>
</dbReference>
<dbReference type="STRING" id="7227.FBpp0073358"/>
<dbReference type="PaxDb" id="7227-FBpp0073358"/>
<dbReference type="DNASU" id="32099"/>
<dbReference type="EnsemblMetazoa" id="FBtr0073509">
    <property type="protein sequence ID" value="FBpp0073358"/>
    <property type="gene ID" value="FBgn0030310"/>
</dbReference>
<dbReference type="EnsemblMetazoa" id="FBtr0340296">
    <property type="protein sequence ID" value="FBpp0309257"/>
    <property type="gene ID" value="FBgn0030310"/>
</dbReference>
<dbReference type="GeneID" id="32099"/>
<dbReference type="KEGG" id="dme:Dmel_CG11709"/>
<dbReference type="AGR" id="FB:FBgn0030310"/>
<dbReference type="CTD" id="32099"/>
<dbReference type="FlyBase" id="FBgn0030310">
    <property type="gene designation" value="PGRP-SA"/>
</dbReference>
<dbReference type="VEuPathDB" id="VectorBase:FBgn0030310"/>
<dbReference type="eggNOG" id="ENOG502S2KY">
    <property type="taxonomic scope" value="Eukaryota"/>
</dbReference>
<dbReference type="HOGENOM" id="CLU_037559_3_0_1"/>
<dbReference type="InParanoid" id="Q9VYX7"/>
<dbReference type="OMA" id="RFVVIHH"/>
<dbReference type="OrthoDB" id="10001926at2759"/>
<dbReference type="PhylomeDB" id="Q9VYX7"/>
<dbReference type="Reactome" id="R-DME-6798695">
    <property type="pathway name" value="Neutrophil degranulation"/>
</dbReference>
<dbReference type="Reactome" id="R-DME-6803157">
    <property type="pathway name" value="Antimicrobial peptides"/>
</dbReference>
<dbReference type="BioGRID-ORCS" id="32099">
    <property type="hits" value="0 hits in 3 CRISPR screens"/>
</dbReference>
<dbReference type="EvolutionaryTrace" id="Q9VYX7"/>
<dbReference type="GenomeRNAi" id="32099"/>
<dbReference type="PRO" id="PR:Q9VYX7"/>
<dbReference type="Proteomes" id="UP000000803">
    <property type="component" value="Chromosome X"/>
</dbReference>
<dbReference type="Bgee" id="FBgn0030310">
    <property type="expression patterns" value="Expressed in seminal fluid secreting gland and 68 other cell types or tissues"/>
</dbReference>
<dbReference type="ExpressionAtlas" id="Q9VYX7">
    <property type="expression patterns" value="baseline and differential"/>
</dbReference>
<dbReference type="GO" id="GO:0005576">
    <property type="term" value="C:extracellular region"/>
    <property type="evidence" value="ECO:0000314"/>
    <property type="project" value="UniProtKB"/>
</dbReference>
<dbReference type="GO" id="GO:0106415">
    <property type="term" value="F:muramoyltetrapeptide carboxypeptidase activity"/>
    <property type="evidence" value="ECO:0000314"/>
    <property type="project" value="FlyBase"/>
</dbReference>
<dbReference type="GO" id="GO:0032500">
    <property type="term" value="F:muramyl dipeptide binding"/>
    <property type="evidence" value="ECO:0000314"/>
    <property type="project" value="FlyBase"/>
</dbReference>
<dbReference type="GO" id="GO:0038187">
    <property type="term" value="F:pattern recognition receptor activity"/>
    <property type="evidence" value="ECO:0000315"/>
    <property type="project" value="FlyBase"/>
</dbReference>
<dbReference type="GO" id="GO:0042834">
    <property type="term" value="F:peptidoglycan binding"/>
    <property type="evidence" value="ECO:0000314"/>
    <property type="project" value="FlyBase"/>
</dbReference>
<dbReference type="GO" id="GO:0016019">
    <property type="term" value="F:peptidoglycan immune receptor activity"/>
    <property type="evidence" value="ECO:0000304"/>
    <property type="project" value="FlyBase"/>
</dbReference>
<dbReference type="GO" id="GO:0008270">
    <property type="term" value="F:zinc ion binding"/>
    <property type="evidence" value="ECO:0007669"/>
    <property type="project" value="InterPro"/>
</dbReference>
<dbReference type="GO" id="GO:0050830">
    <property type="term" value="P:defense response to Gram-positive bacterium"/>
    <property type="evidence" value="ECO:0000314"/>
    <property type="project" value="UniProtKB"/>
</dbReference>
<dbReference type="GO" id="GO:0045087">
    <property type="term" value="P:innate immune response"/>
    <property type="evidence" value="ECO:0000303"/>
    <property type="project" value="UniProtKB"/>
</dbReference>
<dbReference type="GO" id="GO:0009253">
    <property type="term" value="P:peptidoglycan catabolic process"/>
    <property type="evidence" value="ECO:0007669"/>
    <property type="project" value="InterPro"/>
</dbReference>
<dbReference type="GO" id="GO:0006965">
    <property type="term" value="P:positive regulation of biosynthetic process of antibacterial peptides active against Gram-positive bacteria"/>
    <property type="evidence" value="ECO:0000315"/>
    <property type="project" value="UniProtKB"/>
</dbReference>
<dbReference type="GO" id="GO:0006508">
    <property type="term" value="P:proteolysis"/>
    <property type="evidence" value="ECO:0007669"/>
    <property type="project" value="UniProtKB-KW"/>
</dbReference>
<dbReference type="GO" id="GO:0032494">
    <property type="term" value="P:response to peptidoglycan"/>
    <property type="evidence" value="ECO:0000315"/>
    <property type="project" value="FlyBase"/>
</dbReference>
<dbReference type="GO" id="GO:0160032">
    <property type="term" value="P:Toll receptor ligand protein activation cascade"/>
    <property type="evidence" value="ECO:0000315"/>
    <property type="project" value="FlyBase"/>
</dbReference>
<dbReference type="CDD" id="cd06583">
    <property type="entry name" value="PGRP"/>
    <property type="match status" value="1"/>
</dbReference>
<dbReference type="FunFam" id="3.40.80.10:FF:000001">
    <property type="entry name" value="Peptidoglycan recognition protein 1"/>
    <property type="match status" value="1"/>
</dbReference>
<dbReference type="Gene3D" id="3.40.80.10">
    <property type="entry name" value="Peptidoglycan recognition protein-like"/>
    <property type="match status" value="1"/>
</dbReference>
<dbReference type="InterPro" id="IPR036505">
    <property type="entry name" value="Amidase/PGRP_sf"/>
</dbReference>
<dbReference type="InterPro" id="IPR002502">
    <property type="entry name" value="Amidase_domain"/>
</dbReference>
<dbReference type="InterPro" id="IPR017331">
    <property type="entry name" value="Peptidoglycan_recognition"/>
</dbReference>
<dbReference type="InterPro" id="IPR015510">
    <property type="entry name" value="PGRP"/>
</dbReference>
<dbReference type="InterPro" id="IPR006619">
    <property type="entry name" value="PGRP_domain_met/bac"/>
</dbReference>
<dbReference type="PANTHER" id="PTHR11022">
    <property type="entry name" value="PEPTIDOGLYCAN RECOGNITION PROTEIN"/>
    <property type="match status" value="1"/>
</dbReference>
<dbReference type="PANTHER" id="PTHR11022:SF74">
    <property type="entry name" value="PEPTIDOGLYCAN-RECOGNITION PROTEIN SA"/>
    <property type="match status" value="1"/>
</dbReference>
<dbReference type="Pfam" id="PF01510">
    <property type="entry name" value="Amidase_2"/>
    <property type="match status" value="1"/>
</dbReference>
<dbReference type="PIRSF" id="PIRSF037945">
    <property type="entry name" value="PGRPs"/>
    <property type="match status" value="1"/>
</dbReference>
<dbReference type="SMART" id="SM00644">
    <property type="entry name" value="Ami_2"/>
    <property type="match status" value="1"/>
</dbReference>
<dbReference type="SMART" id="SM00701">
    <property type="entry name" value="PGRP"/>
    <property type="match status" value="1"/>
</dbReference>
<dbReference type="SUPFAM" id="SSF55846">
    <property type="entry name" value="N-acetylmuramoyl-L-alanine amidase-like"/>
    <property type="match status" value="1"/>
</dbReference>
<feature type="signal peptide" evidence="2">
    <location>
        <begin position="1"/>
        <end position="26"/>
    </location>
</feature>
<feature type="chain" id="PRO_0000023906" description="Peptidoglycan-recognition protein SA">
    <location>
        <begin position="27"/>
        <end position="203"/>
    </location>
</feature>
<feature type="domain" description="N-acetylmuramoyl-L-alanine amidase" evidence="1">
    <location>
        <begin position="59"/>
        <end position="186"/>
    </location>
</feature>
<feature type="region of interest" description="Peptidoglycan binding" evidence="10">
    <location>
        <begin position="87"/>
        <end position="90"/>
    </location>
</feature>
<feature type="region of interest" description="Peptidoglycan binding" evidence="10">
    <location>
        <begin position="97"/>
        <end position="102"/>
    </location>
</feature>
<feature type="site" description="Interacts with peptidoglycan" evidence="10">
    <location>
        <position position="182"/>
    </location>
</feature>
<feature type="disulfide bond">
    <location>
        <begin position="37"/>
        <end position="160"/>
    </location>
</feature>
<feature type="disulfide bond">
    <location>
        <begin position="74"/>
        <end position="80"/>
    </location>
</feature>
<feature type="mutagenesis site" description="Does not affect activation of Toll pathway." evidence="7">
    <original>C</original>
    <variation>A</variation>
    <location>
        <position position="37"/>
    </location>
</feature>
<feature type="mutagenesis site" description="Abolishes L,D-carboxypeptidase activity on DAP-type PGN." evidence="7">
    <original>H</original>
    <variation>A</variation>
    <location>
        <position position="68"/>
    </location>
</feature>
<feature type="mutagenesis site" description="Strongly reduces PGN-binding and activation of Toll pathway." evidence="7">
    <original>VT</original>
    <variation>AA</variation>
    <location>
        <begin position="70"/>
        <end position="71"/>
    </location>
</feature>
<feature type="mutagenesis site" description="Abolishes activation of Toll pathway." evidence="7">
    <original>C</original>
    <variation>A</variation>
    <location>
        <position position="74"/>
    </location>
</feature>
<feature type="mutagenesis site" description="In seml; induces susceptibility to Gram-positive bacterial infection." evidence="3">
    <original>C</original>
    <variation>Y</variation>
    <location>
        <position position="80"/>
    </location>
</feature>
<feature type="mutagenesis site" description="Strongly reduces PGN-binding and activation of Toll pathway." evidence="7">
    <original>YH</original>
    <variation>AA</variation>
    <location>
        <begin position="90"/>
        <end position="91"/>
    </location>
</feature>
<feature type="mutagenesis site" description="Strongly reduces PGN-binding and activation of Toll pathway." evidence="7">
    <original>DFN</original>
    <variation>AAA</variation>
    <location>
        <begin position="96"/>
        <end position="98"/>
    </location>
</feature>
<feature type="mutagenesis site" description="Increases PGN-binding and activation of Toll pathway." evidence="7">
    <original>S</original>
    <variation>A</variation>
    <location>
        <position position="101"/>
    </location>
</feature>
<feature type="mutagenesis site" description="Strongly reduces PGN-binding and activation of Toll pathway." evidence="7">
    <original>Y</original>
    <variation>A</variation>
    <location>
        <position position="126"/>
    </location>
</feature>
<feature type="mutagenesis site" description="Strongly reduces PGN-binding." evidence="7">
    <original>I</original>
    <variation>A</variation>
    <location>
        <position position="180"/>
    </location>
</feature>
<feature type="mutagenesis site" description="Abolishes PGN-binding and activation of Toll pathway." evidence="7">
    <original>T</original>
    <variation>Y</variation>
    <location>
        <position position="182"/>
    </location>
</feature>
<feature type="mutagenesis site" description="Abolishes PGN-binding and activation of Toll pathway. Abolishes L,D-carboxypeptidase activity on DAP-type PGN." evidence="7">
    <original>S</original>
    <variation>A</variation>
    <variation>C</variation>
    <location>
        <position position="184"/>
    </location>
</feature>
<feature type="helix" evidence="13">
    <location>
        <begin position="43"/>
        <end position="46"/>
    </location>
</feature>
<feature type="strand" evidence="13">
    <location>
        <begin position="59"/>
        <end position="68"/>
    </location>
</feature>
<feature type="helix" evidence="13">
    <location>
        <begin position="76"/>
        <end position="93"/>
    </location>
</feature>
<feature type="strand" evidence="13">
    <location>
        <begin position="101"/>
        <end position="106"/>
    </location>
</feature>
<feature type="strand" evidence="13">
    <location>
        <begin position="112"/>
        <end position="116"/>
    </location>
</feature>
<feature type="strand" evidence="13">
    <location>
        <begin position="123"/>
        <end position="125"/>
    </location>
</feature>
<feature type="turn" evidence="13">
    <location>
        <begin position="129"/>
        <end position="131"/>
    </location>
</feature>
<feature type="strand" evidence="13">
    <location>
        <begin position="132"/>
        <end position="139"/>
    </location>
</feature>
<feature type="strand" evidence="13">
    <location>
        <begin position="142"/>
        <end position="144"/>
    </location>
</feature>
<feature type="helix" evidence="13">
    <location>
        <begin position="148"/>
        <end position="163"/>
    </location>
</feature>
<feature type="strand" evidence="13">
    <location>
        <begin position="166"/>
        <end position="175"/>
    </location>
</feature>
<feature type="helix" evidence="13">
    <location>
        <begin position="176"/>
        <end position="178"/>
    </location>
</feature>
<feature type="strand" evidence="12">
    <location>
        <begin position="180"/>
        <end position="182"/>
    </location>
</feature>
<feature type="helix" evidence="13">
    <location>
        <begin position="187"/>
        <end position="193"/>
    </location>
</feature>
<comment type="function">
    <text evidence="3 5 6 7 8 9">Peptidoglycan-recognition protein that plays a key role in innate immunity by binding to peptidoglycans (PGN) of Gram-positive bacteria and activating the Toll pathway upstream of spz activating enzyme SPE (PubMed:11106397, PubMed:15448690, PubMed:16399077). Has no activity against Gram-negative bacteria and fungi (PubMed:11742401). Shows some partial redundancy with PRPGP-SD in Gram-positive bacteria recognition (PubMed:11742401, PubMed:15448690). May act by forming a complex with GNBP1 that activates the proteolytic cleavage of Spatzle and the subsequent activation of Toll pathway (PubMed:11742401, PubMed:14684822, PubMed:14722090). Binds to diaminopimelic acid-type tetrapeptide PGN (DAP-type PGN) and lysine-type PGN (Lys-type PGN) (PubMed:15361936). Has some L,D-carboxypeptidase activity for DAP-type PGN, which are specific to prokaryotes, but not for Lys-type PGN (PubMed:15361936).</text>
</comment>
<comment type="catalytic activity">
    <reaction evidence="7">
        <text>N-acetyl-D-glucosaminyl-N-acetylmuramoyl-L-alanyl-meso-2,6-diaminoheptanedioyl-D-alanine + H2O = N-acetyl-D-glucosaminyl-N-acetylmuramoyl-L-alanyl-meso-2,6-diaminoheptanedioate + D-alanine</text>
        <dbReference type="Rhea" id="RHEA:48688"/>
        <dbReference type="ChEBI" id="CHEBI:15377"/>
        <dbReference type="ChEBI" id="CHEBI:57416"/>
        <dbReference type="ChEBI" id="CHEBI:233808"/>
        <dbReference type="ChEBI" id="CHEBI:233809"/>
        <dbReference type="EC" id="3.4.17.13"/>
    </reaction>
</comment>
<comment type="biophysicochemical properties">
    <kinetics>
        <KM evidence="7">21.4 uM for GlcNAc-MurNAc(anhydro)-L-Ala-gamma-D-Glu-meso-DAP-D-Ala</KM>
    </kinetics>
</comment>
<comment type="interaction">
    <interactant intactId="EBI-15721239">
        <id>Q9VYX7</id>
    </interactant>
    <interactant intactId="EBI-15721168">
        <id>Q9NHB0</id>
        <label>GNBP1</label>
    </interactant>
    <organismsDiffer>false</organismsDiffer>
    <experiments>4</experiments>
</comment>
<comment type="subcellular location">
    <subcellularLocation>
        <location evidence="3">Secreted</location>
    </subcellularLocation>
    <text>Secreted in hemolymph.</text>
</comment>
<comment type="tissue specificity">
    <text evidence="2 3">In larvae, it is expressed in fat body. Also expressed in uninduced hemocytes and mbn-2 cells.</text>
</comment>
<comment type="induction">
    <text evidence="2 4">Strongly up-regulated by PGN from B.subtilis. Regulated by both imd/Relish and Toll pathways.</text>
</comment>
<comment type="similarity">
    <text evidence="10">Belongs to the N-acetylmuramoyl-L-alanine amidase 2 family.</text>
</comment>
<comment type="caution">
    <text evidence="11">Although suggested, the interaction with GNBP1 has not been experimentally demonstrated.</text>
</comment>
<keyword id="KW-0002">3D-structure</keyword>
<keyword id="KW-0903">Direct protein sequencing</keyword>
<keyword id="KW-1015">Disulfide bond</keyword>
<keyword id="KW-0378">Hydrolase</keyword>
<keyword id="KW-0391">Immunity</keyword>
<keyword id="KW-0399">Innate immunity</keyword>
<keyword id="KW-0645">Protease</keyword>
<keyword id="KW-1185">Reference proteome</keyword>
<keyword id="KW-0964">Secreted</keyword>
<keyword id="KW-0732">Signal</keyword>
<name>PGPSA_DROME</name>